<protein>
    <recommendedName>
        <fullName evidence="1">Uridylate kinase</fullName>
        <shortName evidence="1">UK</shortName>
        <ecNumber evidence="1">2.7.4.22</ecNumber>
    </recommendedName>
    <alternativeName>
        <fullName evidence="1">Uridine monophosphate kinase</fullName>
        <shortName evidence="1">UMP kinase</shortName>
        <shortName evidence="1">UMPK</shortName>
    </alternativeName>
</protein>
<feature type="chain" id="PRO_0000323816" description="Uridylate kinase">
    <location>
        <begin position="1"/>
        <end position="237"/>
    </location>
</feature>
<feature type="binding site" evidence="1">
    <location>
        <begin position="11"/>
        <end position="14"/>
    </location>
    <ligand>
        <name>ATP</name>
        <dbReference type="ChEBI" id="CHEBI:30616"/>
    </ligand>
</feature>
<feature type="binding site" evidence="1">
    <location>
        <position position="53"/>
    </location>
    <ligand>
        <name>UMP</name>
        <dbReference type="ChEBI" id="CHEBI:57865"/>
    </ligand>
</feature>
<feature type="binding site" evidence="1">
    <location>
        <position position="54"/>
    </location>
    <ligand>
        <name>ATP</name>
        <dbReference type="ChEBI" id="CHEBI:30616"/>
    </ligand>
</feature>
<feature type="binding site" evidence="1">
    <location>
        <position position="58"/>
    </location>
    <ligand>
        <name>ATP</name>
        <dbReference type="ChEBI" id="CHEBI:30616"/>
    </ligand>
</feature>
<feature type="binding site" evidence="1">
    <location>
        <position position="73"/>
    </location>
    <ligand>
        <name>UMP</name>
        <dbReference type="ChEBI" id="CHEBI:57865"/>
    </ligand>
</feature>
<feature type="binding site" evidence="1">
    <location>
        <begin position="134"/>
        <end position="141"/>
    </location>
    <ligand>
        <name>UMP</name>
        <dbReference type="ChEBI" id="CHEBI:57865"/>
    </ligand>
</feature>
<feature type="binding site" evidence="1">
    <location>
        <position position="161"/>
    </location>
    <ligand>
        <name>ATP</name>
        <dbReference type="ChEBI" id="CHEBI:30616"/>
    </ligand>
</feature>
<feature type="binding site" evidence="1">
    <location>
        <position position="167"/>
    </location>
    <ligand>
        <name>ATP</name>
        <dbReference type="ChEBI" id="CHEBI:30616"/>
    </ligand>
</feature>
<feature type="binding site" evidence="1">
    <location>
        <position position="170"/>
    </location>
    <ligand>
        <name>ATP</name>
        <dbReference type="ChEBI" id="CHEBI:30616"/>
    </ligand>
</feature>
<comment type="function">
    <text evidence="1">Catalyzes the reversible phosphorylation of UMP to UDP.</text>
</comment>
<comment type="catalytic activity">
    <reaction evidence="1">
        <text>UMP + ATP = UDP + ADP</text>
        <dbReference type="Rhea" id="RHEA:24400"/>
        <dbReference type="ChEBI" id="CHEBI:30616"/>
        <dbReference type="ChEBI" id="CHEBI:57865"/>
        <dbReference type="ChEBI" id="CHEBI:58223"/>
        <dbReference type="ChEBI" id="CHEBI:456216"/>
        <dbReference type="EC" id="2.7.4.22"/>
    </reaction>
</comment>
<comment type="activity regulation">
    <text evidence="1">Inhibited by UTP.</text>
</comment>
<comment type="pathway">
    <text evidence="1">Pyrimidine metabolism; CTP biosynthesis via de novo pathway; UDP from UMP (UMPK route): step 1/1.</text>
</comment>
<comment type="subunit">
    <text evidence="1">Homohexamer.</text>
</comment>
<comment type="subcellular location">
    <subcellularLocation>
        <location evidence="1">Cytoplasm</location>
    </subcellularLocation>
</comment>
<comment type="similarity">
    <text evidence="1">Belongs to the UMP kinase family.</text>
</comment>
<sequence length="237" mass="25404">MSNAYKRVLLKLSGEALMGDDAFGINRATIERMVADIAEVVRLGTQLAVVIGGGNIFRGVAGGAAGMDRATADYMGMLATMMNALALQDAMRHAGIEARVQSALRMDQVVEPYIRPRAIRQLEEGRVVIFAAGTGNPFFTTDTAAALRGSEVGAEVVLKATKVDGVYSADPKKDPSATRYTTITFDEAISRNLQVMDATAFALCRDQKLPIRVFSINKPGALKRIVLGEDEGTLVHV</sequence>
<accession>Q39F45</accession>
<dbReference type="EC" id="2.7.4.22" evidence="1"/>
<dbReference type="EMBL" id="CP000151">
    <property type="protein sequence ID" value="ABB08921.1"/>
    <property type="molecule type" value="Genomic_DNA"/>
</dbReference>
<dbReference type="RefSeq" id="WP_011352459.1">
    <property type="nucleotide sequence ID" value="NZ_WNDV01000025.1"/>
</dbReference>
<dbReference type="SMR" id="Q39F45"/>
<dbReference type="GeneID" id="93191616"/>
<dbReference type="KEGG" id="bur:Bcep18194_A5327"/>
<dbReference type="HOGENOM" id="CLU_033861_0_0_4"/>
<dbReference type="UniPathway" id="UPA00159">
    <property type="reaction ID" value="UER00275"/>
</dbReference>
<dbReference type="Proteomes" id="UP000002705">
    <property type="component" value="Chromosome 1"/>
</dbReference>
<dbReference type="GO" id="GO:0005829">
    <property type="term" value="C:cytosol"/>
    <property type="evidence" value="ECO:0007669"/>
    <property type="project" value="TreeGrafter"/>
</dbReference>
<dbReference type="GO" id="GO:0005524">
    <property type="term" value="F:ATP binding"/>
    <property type="evidence" value="ECO:0007669"/>
    <property type="project" value="UniProtKB-KW"/>
</dbReference>
<dbReference type="GO" id="GO:0033862">
    <property type="term" value="F:UMP kinase activity"/>
    <property type="evidence" value="ECO:0007669"/>
    <property type="project" value="UniProtKB-EC"/>
</dbReference>
<dbReference type="GO" id="GO:0044210">
    <property type="term" value="P:'de novo' CTP biosynthetic process"/>
    <property type="evidence" value="ECO:0007669"/>
    <property type="project" value="UniProtKB-UniRule"/>
</dbReference>
<dbReference type="GO" id="GO:0006225">
    <property type="term" value="P:UDP biosynthetic process"/>
    <property type="evidence" value="ECO:0007669"/>
    <property type="project" value="TreeGrafter"/>
</dbReference>
<dbReference type="CDD" id="cd04254">
    <property type="entry name" value="AAK_UMPK-PyrH-Ec"/>
    <property type="match status" value="1"/>
</dbReference>
<dbReference type="FunFam" id="3.40.1160.10:FF:000001">
    <property type="entry name" value="Uridylate kinase"/>
    <property type="match status" value="1"/>
</dbReference>
<dbReference type="Gene3D" id="3.40.1160.10">
    <property type="entry name" value="Acetylglutamate kinase-like"/>
    <property type="match status" value="1"/>
</dbReference>
<dbReference type="HAMAP" id="MF_01220_B">
    <property type="entry name" value="PyrH_B"/>
    <property type="match status" value="1"/>
</dbReference>
<dbReference type="InterPro" id="IPR036393">
    <property type="entry name" value="AceGlu_kinase-like_sf"/>
</dbReference>
<dbReference type="InterPro" id="IPR001048">
    <property type="entry name" value="Asp/Glu/Uridylate_kinase"/>
</dbReference>
<dbReference type="InterPro" id="IPR011817">
    <property type="entry name" value="Uridylate_kinase"/>
</dbReference>
<dbReference type="InterPro" id="IPR015963">
    <property type="entry name" value="Uridylate_kinase_bac"/>
</dbReference>
<dbReference type="NCBIfam" id="TIGR02075">
    <property type="entry name" value="pyrH_bact"/>
    <property type="match status" value="1"/>
</dbReference>
<dbReference type="PANTHER" id="PTHR42833">
    <property type="entry name" value="URIDYLATE KINASE"/>
    <property type="match status" value="1"/>
</dbReference>
<dbReference type="PANTHER" id="PTHR42833:SF4">
    <property type="entry name" value="URIDYLATE KINASE PUMPKIN, CHLOROPLASTIC"/>
    <property type="match status" value="1"/>
</dbReference>
<dbReference type="Pfam" id="PF00696">
    <property type="entry name" value="AA_kinase"/>
    <property type="match status" value="1"/>
</dbReference>
<dbReference type="PIRSF" id="PIRSF005650">
    <property type="entry name" value="Uridylate_kin"/>
    <property type="match status" value="1"/>
</dbReference>
<dbReference type="SUPFAM" id="SSF53633">
    <property type="entry name" value="Carbamate kinase-like"/>
    <property type="match status" value="1"/>
</dbReference>
<name>PYRH_BURL3</name>
<organism>
    <name type="scientific">Burkholderia lata (strain ATCC 17760 / DSM 23089 / LMG 22485 / NCIMB 9086 / R18194 / 383)</name>
    <dbReference type="NCBI Taxonomy" id="482957"/>
    <lineage>
        <taxon>Bacteria</taxon>
        <taxon>Pseudomonadati</taxon>
        <taxon>Pseudomonadota</taxon>
        <taxon>Betaproteobacteria</taxon>
        <taxon>Burkholderiales</taxon>
        <taxon>Burkholderiaceae</taxon>
        <taxon>Burkholderia</taxon>
        <taxon>Burkholderia cepacia complex</taxon>
    </lineage>
</organism>
<evidence type="ECO:0000255" key="1">
    <source>
        <dbReference type="HAMAP-Rule" id="MF_01220"/>
    </source>
</evidence>
<keyword id="KW-0067">ATP-binding</keyword>
<keyword id="KW-0963">Cytoplasm</keyword>
<keyword id="KW-0418">Kinase</keyword>
<keyword id="KW-0547">Nucleotide-binding</keyword>
<keyword id="KW-0665">Pyrimidine biosynthesis</keyword>
<keyword id="KW-0808">Transferase</keyword>
<proteinExistence type="inferred from homology"/>
<reference key="1">
    <citation type="submission" date="2005-10" db="EMBL/GenBank/DDBJ databases">
        <title>Complete sequence of chromosome 1 of Burkholderia sp. 383.</title>
        <authorList>
            <consortium name="US DOE Joint Genome Institute"/>
            <person name="Copeland A."/>
            <person name="Lucas S."/>
            <person name="Lapidus A."/>
            <person name="Barry K."/>
            <person name="Detter J.C."/>
            <person name="Glavina T."/>
            <person name="Hammon N."/>
            <person name="Israni S."/>
            <person name="Pitluck S."/>
            <person name="Chain P."/>
            <person name="Malfatti S."/>
            <person name="Shin M."/>
            <person name="Vergez L."/>
            <person name="Schmutz J."/>
            <person name="Larimer F."/>
            <person name="Land M."/>
            <person name="Kyrpides N."/>
            <person name="Lykidis A."/>
            <person name="Richardson P."/>
        </authorList>
    </citation>
    <scope>NUCLEOTIDE SEQUENCE [LARGE SCALE GENOMIC DNA]</scope>
    <source>
        <strain>ATCC 17760 / DSM 23089 / LMG 22485 / NCIMB 9086 / R18194 / 383</strain>
    </source>
</reference>
<gene>
    <name evidence="1" type="primary">pyrH</name>
    <name type="ordered locus">Bcep18194_A5327</name>
</gene>